<comment type="function">
    <text evidence="1">Ligates lysine onto the cytidine present at position 34 of the AUA codon-specific tRNA(Ile) that contains the anticodon CAU, in an ATP-dependent manner. Cytidine is converted to lysidine, thus changing the amino acid specificity of the tRNA from methionine to isoleucine.</text>
</comment>
<comment type="catalytic activity">
    <reaction evidence="1">
        <text>cytidine(34) in tRNA(Ile2) + L-lysine + ATP = lysidine(34) in tRNA(Ile2) + AMP + diphosphate + H(+)</text>
        <dbReference type="Rhea" id="RHEA:43744"/>
        <dbReference type="Rhea" id="RHEA-COMP:10625"/>
        <dbReference type="Rhea" id="RHEA-COMP:10670"/>
        <dbReference type="ChEBI" id="CHEBI:15378"/>
        <dbReference type="ChEBI" id="CHEBI:30616"/>
        <dbReference type="ChEBI" id="CHEBI:32551"/>
        <dbReference type="ChEBI" id="CHEBI:33019"/>
        <dbReference type="ChEBI" id="CHEBI:82748"/>
        <dbReference type="ChEBI" id="CHEBI:83665"/>
        <dbReference type="ChEBI" id="CHEBI:456215"/>
        <dbReference type="EC" id="6.3.4.19"/>
    </reaction>
</comment>
<comment type="subcellular location">
    <subcellularLocation>
        <location evidence="1">Cytoplasm</location>
    </subcellularLocation>
</comment>
<comment type="domain">
    <text>The N-terminal region contains the highly conserved SGGXDS motif, predicted to be a P-loop motif involved in ATP binding.</text>
</comment>
<comment type="similarity">
    <text evidence="1">Belongs to the tRNA(Ile)-lysidine synthase family.</text>
</comment>
<dbReference type="EC" id="6.3.4.19" evidence="1"/>
<dbReference type="EMBL" id="CP000029">
    <property type="protein sequence ID" value="AAW53509.1"/>
    <property type="molecule type" value="Genomic_DNA"/>
</dbReference>
<dbReference type="RefSeq" id="WP_002447894.1">
    <property type="nucleotide sequence ID" value="NC_002976.3"/>
</dbReference>
<dbReference type="SMR" id="Q5HRP5"/>
<dbReference type="STRING" id="176279.SERP0148"/>
<dbReference type="GeneID" id="50019580"/>
<dbReference type="KEGG" id="ser:SERP0148"/>
<dbReference type="eggNOG" id="COG0037">
    <property type="taxonomic scope" value="Bacteria"/>
</dbReference>
<dbReference type="HOGENOM" id="CLU_018869_0_2_9"/>
<dbReference type="Proteomes" id="UP000000531">
    <property type="component" value="Chromosome"/>
</dbReference>
<dbReference type="GO" id="GO:0005737">
    <property type="term" value="C:cytoplasm"/>
    <property type="evidence" value="ECO:0007669"/>
    <property type="project" value="UniProtKB-SubCell"/>
</dbReference>
<dbReference type="GO" id="GO:0005524">
    <property type="term" value="F:ATP binding"/>
    <property type="evidence" value="ECO:0007669"/>
    <property type="project" value="UniProtKB-KW"/>
</dbReference>
<dbReference type="GO" id="GO:0032267">
    <property type="term" value="F:tRNA(Ile)-lysidine synthase activity"/>
    <property type="evidence" value="ECO:0007669"/>
    <property type="project" value="UniProtKB-EC"/>
</dbReference>
<dbReference type="GO" id="GO:0006400">
    <property type="term" value="P:tRNA modification"/>
    <property type="evidence" value="ECO:0007669"/>
    <property type="project" value="UniProtKB-UniRule"/>
</dbReference>
<dbReference type="CDD" id="cd01992">
    <property type="entry name" value="TilS_N"/>
    <property type="match status" value="1"/>
</dbReference>
<dbReference type="Gene3D" id="3.40.50.620">
    <property type="entry name" value="HUPs"/>
    <property type="match status" value="1"/>
</dbReference>
<dbReference type="HAMAP" id="MF_01161">
    <property type="entry name" value="tRNA_Ile_lys_synt"/>
    <property type="match status" value="1"/>
</dbReference>
<dbReference type="InterPro" id="IPR012796">
    <property type="entry name" value="Lysidine-tRNA-synth_C"/>
</dbReference>
<dbReference type="InterPro" id="IPR014729">
    <property type="entry name" value="Rossmann-like_a/b/a_fold"/>
</dbReference>
<dbReference type="InterPro" id="IPR011063">
    <property type="entry name" value="TilS/TtcA_N"/>
</dbReference>
<dbReference type="InterPro" id="IPR012094">
    <property type="entry name" value="tRNA_Ile_lys_synt"/>
</dbReference>
<dbReference type="InterPro" id="IPR012795">
    <property type="entry name" value="tRNA_Ile_lys_synt_N"/>
</dbReference>
<dbReference type="NCBIfam" id="TIGR02433">
    <property type="entry name" value="lysidine_TilS_C"/>
    <property type="match status" value="1"/>
</dbReference>
<dbReference type="NCBIfam" id="TIGR02432">
    <property type="entry name" value="lysidine_TilS_N"/>
    <property type="match status" value="1"/>
</dbReference>
<dbReference type="PANTHER" id="PTHR43033">
    <property type="entry name" value="TRNA(ILE)-LYSIDINE SYNTHASE-RELATED"/>
    <property type="match status" value="1"/>
</dbReference>
<dbReference type="PANTHER" id="PTHR43033:SF1">
    <property type="entry name" value="TRNA(ILE)-LYSIDINE SYNTHASE-RELATED"/>
    <property type="match status" value="1"/>
</dbReference>
<dbReference type="Pfam" id="PF01171">
    <property type="entry name" value="ATP_bind_3"/>
    <property type="match status" value="1"/>
</dbReference>
<dbReference type="Pfam" id="PF11734">
    <property type="entry name" value="TilS_C"/>
    <property type="match status" value="1"/>
</dbReference>
<dbReference type="SMART" id="SM00977">
    <property type="entry name" value="TilS_C"/>
    <property type="match status" value="1"/>
</dbReference>
<dbReference type="SUPFAM" id="SSF52402">
    <property type="entry name" value="Adenine nucleotide alpha hydrolases-like"/>
    <property type="match status" value="1"/>
</dbReference>
<dbReference type="SUPFAM" id="SSF56037">
    <property type="entry name" value="PheT/TilS domain"/>
    <property type="match status" value="1"/>
</dbReference>
<sequence>MNIKTDGWSKKAHIVVAVSTGIDSMSLLYSLLNDYQHTYRKLTCVHVNHGLREQSYEEEAFLREYCHQHHIDIYIKRLDLSDIVADGNSIQQEARQRRYEWFGDIIAQLRADVLLTAHHLDDQFETIIYRLFTGRSTRNSLGMTYESYFNQYKVYRPMLNLKKTEILAYQYANQIPYYEDMSNQDRKYVRNDIRQRIIPAINENPHLNAHQLLKLKDWHDIELQSLKEQAETFINNEVSKSKYLTYSFSRTAFNELNVNIKSVVMDLLFEKLDCHLAMPQHAYDEWFEQIRNDKSQFNIHVTDEWIIQIAYDKLIIMAKSEMDQYILDRICIRKPGTYEFNDYQIDIHPDLPQQLYPLTVRVRQNGDVYKLNGQKGHKKVSRLFIDKKVTLAERQRIPLIINQENAVLAIGDLYVKENFKEFILISNNGDEL</sequence>
<keyword id="KW-0067">ATP-binding</keyword>
<keyword id="KW-0963">Cytoplasm</keyword>
<keyword id="KW-0436">Ligase</keyword>
<keyword id="KW-0547">Nucleotide-binding</keyword>
<keyword id="KW-1185">Reference proteome</keyword>
<keyword id="KW-0819">tRNA processing</keyword>
<feature type="chain" id="PRO_0000181772" description="tRNA(Ile)-lysidine synthase">
    <location>
        <begin position="1"/>
        <end position="432"/>
    </location>
</feature>
<feature type="binding site" evidence="1">
    <location>
        <begin position="19"/>
        <end position="24"/>
    </location>
    <ligand>
        <name>ATP</name>
        <dbReference type="ChEBI" id="CHEBI:30616"/>
    </ligand>
</feature>
<protein>
    <recommendedName>
        <fullName evidence="1">tRNA(Ile)-lysidine synthase</fullName>
        <ecNumber evidence="1">6.3.4.19</ecNumber>
    </recommendedName>
    <alternativeName>
        <fullName evidence="1">tRNA(Ile)-2-lysyl-cytidine synthase</fullName>
    </alternativeName>
    <alternativeName>
        <fullName evidence="1">tRNA(Ile)-lysidine synthetase</fullName>
    </alternativeName>
</protein>
<gene>
    <name evidence="1" type="primary">tilS</name>
    <name type="ordered locus">SERP0148</name>
</gene>
<name>TILS_STAEQ</name>
<organism>
    <name type="scientific">Staphylococcus epidermidis (strain ATCC 35984 / DSM 28319 / BCRC 17069 / CCUG 31568 / BM 3577 / RP62A)</name>
    <dbReference type="NCBI Taxonomy" id="176279"/>
    <lineage>
        <taxon>Bacteria</taxon>
        <taxon>Bacillati</taxon>
        <taxon>Bacillota</taxon>
        <taxon>Bacilli</taxon>
        <taxon>Bacillales</taxon>
        <taxon>Staphylococcaceae</taxon>
        <taxon>Staphylococcus</taxon>
    </lineage>
</organism>
<proteinExistence type="inferred from homology"/>
<reference key="1">
    <citation type="journal article" date="2005" name="J. Bacteriol.">
        <title>Insights on evolution of virulence and resistance from the complete genome analysis of an early methicillin-resistant Staphylococcus aureus strain and a biofilm-producing methicillin-resistant Staphylococcus epidermidis strain.</title>
        <authorList>
            <person name="Gill S.R."/>
            <person name="Fouts D.E."/>
            <person name="Archer G.L."/>
            <person name="Mongodin E.F."/>
            <person name="DeBoy R.T."/>
            <person name="Ravel J."/>
            <person name="Paulsen I.T."/>
            <person name="Kolonay J.F."/>
            <person name="Brinkac L.M."/>
            <person name="Beanan M.J."/>
            <person name="Dodson R.J."/>
            <person name="Daugherty S.C."/>
            <person name="Madupu R."/>
            <person name="Angiuoli S.V."/>
            <person name="Durkin A.S."/>
            <person name="Haft D.H."/>
            <person name="Vamathevan J.J."/>
            <person name="Khouri H."/>
            <person name="Utterback T.R."/>
            <person name="Lee C."/>
            <person name="Dimitrov G."/>
            <person name="Jiang L."/>
            <person name="Qin H."/>
            <person name="Weidman J."/>
            <person name="Tran K."/>
            <person name="Kang K.H."/>
            <person name="Hance I.R."/>
            <person name="Nelson K.E."/>
            <person name="Fraser C.M."/>
        </authorList>
    </citation>
    <scope>NUCLEOTIDE SEQUENCE [LARGE SCALE GENOMIC DNA]</scope>
    <source>
        <strain>ATCC 35984 / DSM 28319 / BCRC 17069 / CCUG 31568 / BM 3577 / RP62A</strain>
    </source>
</reference>
<accession>Q5HRP5</accession>
<evidence type="ECO:0000255" key="1">
    <source>
        <dbReference type="HAMAP-Rule" id="MF_01161"/>
    </source>
</evidence>